<accession>B3N6U7</accession>
<comment type="similarity">
    <text evidence="1">Belongs to the ubiquitin-conjugating enzyme family. FTS subfamily.</text>
</comment>
<comment type="caution">
    <text evidence="3">Lacks the conserved Cys residue necessary for ubiquitin-conjugating enzyme E2 activity.</text>
</comment>
<organism>
    <name type="scientific">Drosophila erecta</name>
    <name type="common">Fruit fly</name>
    <dbReference type="NCBI Taxonomy" id="7220"/>
    <lineage>
        <taxon>Eukaryota</taxon>
        <taxon>Metazoa</taxon>
        <taxon>Ecdysozoa</taxon>
        <taxon>Arthropoda</taxon>
        <taxon>Hexapoda</taxon>
        <taxon>Insecta</taxon>
        <taxon>Pterygota</taxon>
        <taxon>Neoptera</taxon>
        <taxon>Endopterygota</taxon>
        <taxon>Diptera</taxon>
        <taxon>Brachycera</taxon>
        <taxon>Muscomorpha</taxon>
        <taxon>Ephydroidea</taxon>
        <taxon>Drosophilidae</taxon>
        <taxon>Drosophila</taxon>
        <taxon>Sophophora</taxon>
    </lineage>
</organism>
<reference key="1">
    <citation type="journal article" date="2007" name="Nature">
        <title>Evolution of genes and genomes on the Drosophila phylogeny.</title>
        <authorList>
            <consortium name="Drosophila 12 genomes consortium"/>
        </authorList>
    </citation>
    <scope>NUCLEOTIDE SEQUENCE [LARGE SCALE GENOMIC DNA]</scope>
    <source>
        <strain>Tucson 14021-0224.01</strain>
    </source>
</reference>
<proteinExistence type="inferred from homology"/>
<sequence>MTLDLDANKKDDKLLLTTIQQEYKILAEYKMIESEKLSGIYVIPSYANSLQWFGVFFGRQGFYTESVFRFTILLPDRFPDDKSLPTIIFQQDVIHPHVCPYTHGLDVSHAFPEWRCGEDHLWQLLKYLQTIFSDPLDSIRGIELDKLKDSEAAELLMTNKEEYVARVQKNIKESKEHIFDTPPTEDPHYIVFEKFQQDVHGPVLERIKAGRSKQTEPSAQQANGGHATGLSWVKEGEFKPLSIE</sequence>
<feature type="chain" id="PRO_0000379030" description="Protein crossbronx">
    <location>
        <begin position="1"/>
        <end position="244"/>
    </location>
</feature>
<feature type="domain" description="UBC core" evidence="1">
    <location>
        <begin position="20"/>
        <end position="176"/>
    </location>
</feature>
<feature type="region of interest" description="Disordered" evidence="2">
    <location>
        <begin position="209"/>
        <end position="244"/>
    </location>
</feature>
<evidence type="ECO:0000255" key="1">
    <source>
        <dbReference type="PROSITE-ProRule" id="PRU00388"/>
    </source>
</evidence>
<evidence type="ECO:0000256" key="2">
    <source>
        <dbReference type="SAM" id="MobiDB-lite"/>
    </source>
</evidence>
<evidence type="ECO:0000305" key="3"/>
<dbReference type="EMBL" id="CH954177">
    <property type="protein sequence ID" value="EDV58196.1"/>
    <property type="molecule type" value="Genomic_DNA"/>
</dbReference>
<dbReference type="SMR" id="B3N6U7"/>
<dbReference type="EnsemblMetazoa" id="FBtr0145307">
    <property type="protein sequence ID" value="FBpp0143799"/>
    <property type="gene ID" value="FBgn0117375"/>
</dbReference>
<dbReference type="EnsemblMetazoa" id="XM_001969101.3">
    <property type="protein sequence ID" value="XP_001969137.1"/>
    <property type="gene ID" value="LOC6541503"/>
</dbReference>
<dbReference type="GeneID" id="6541503"/>
<dbReference type="KEGG" id="der:6541503"/>
<dbReference type="CTD" id="47272"/>
<dbReference type="eggNOG" id="KOG0429">
    <property type="taxonomic scope" value="Eukaryota"/>
</dbReference>
<dbReference type="HOGENOM" id="CLU_083049_1_0_1"/>
<dbReference type="OMA" id="WGFPEWR"/>
<dbReference type="OrthoDB" id="5596422at2759"/>
<dbReference type="PhylomeDB" id="B3N6U7"/>
<dbReference type="ChiTaRS" id="Ubx">
    <property type="organism name" value="fly"/>
</dbReference>
<dbReference type="Proteomes" id="UP000008711">
    <property type="component" value="Unassembled WGS sequence"/>
</dbReference>
<dbReference type="GO" id="GO:0042742">
    <property type="term" value="P:defense response to bacterium"/>
    <property type="evidence" value="ECO:0007669"/>
    <property type="project" value="EnsemblMetazoa"/>
</dbReference>
<dbReference type="GO" id="GO:0007291">
    <property type="term" value="P:sperm individualization"/>
    <property type="evidence" value="ECO:0007669"/>
    <property type="project" value="EnsemblMetazoa"/>
</dbReference>
<dbReference type="CDD" id="cd23814">
    <property type="entry name" value="UEV_AKTIP"/>
    <property type="match status" value="1"/>
</dbReference>
<dbReference type="FunFam" id="3.10.110.10:FF:000121">
    <property type="entry name" value="Protein crossbronx"/>
    <property type="match status" value="1"/>
</dbReference>
<dbReference type="Gene3D" id="3.10.110.10">
    <property type="entry name" value="Ubiquitin Conjugating Enzyme"/>
    <property type="match status" value="1"/>
</dbReference>
<dbReference type="InterPro" id="IPR000608">
    <property type="entry name" value="UBQ-conjugat_E2_core"/>
</dbReference>
<dbReference type="InterPro" id="IPR016135">
    <property type="entry name" value="UBQ-conjugating_enzyme/RWD"/>
</dbReference>
<dbReference type="Pfam" id="PF00179">
    <property type="entry name" value="UQ_con"/>
    <property type="match status" value="1"/>
</dbReference>
<dbReference type="SMART" id="SM00212">
    <property type="entry name" value="UBCc"/>
    <property type="match status" value="1"/>
</dbReference>
<dbReference type="SUPFAM" id="SSF54495">
    <property type="entry name" value="UBC-like"/>
    <property type="match status" value="1"/>
</dbReference>
<dbReference type="PROSITE" id="PS50127">
    <property type="entry name" value="UBC_2"/>
    <property type="match status" value="1"/>
</dbReference>
<protein>
    <recommendedName>
        <fullName>Protein crossbronx</fullName>
    </recommendedName>
</protein>
<gene>
    <name type="primary">cbx</name>
    <name type="ORF">GG25253</name>
</gene>
<name>AKTP1_DROER</name>